<dbReference type="EMBL" id="AP006716">
    <property type="protein sequence ID" value="BAE04991.1"/>
    <property type="molecule type" value="Genomic_DNA"/>
</dbReference>
<dbReference type="RefSeq" id="WP_001830184.1">
    <property type="nucleotide sequence ID" value="NC_007168.1"/>
</dbReference>
<dbReference type="SMR" id="Q4L5T4"/>
<dbReference type="KEGG" id="sha:SH1682"/>
<dbReference type="eggNOG" id="COG0236">
    <property type="taxonomic scope" value="Bacteria"/>
</dbReference>
<dbReference type="HOGENOM" id="CLU_108696_5_1_9"/>
<dbReference type="OrthoDB" id="9804551at2"/>
<dbReference type="UniPathway" id="UPA00094"/>
<dbReference type="Proteomes" id="UP000000543">
    <property type="component" value="Chromosome"/>
</dbReference>
<dbReference type="GO" id="GO:0005829">
    <property type="term" value="C:cytosol"/>
    <property type="evidence" value="ECO:0007669"/>
    <property type="project" value="TreeGrafter"/>
</dbReference>
<dbReference type="GO" id="GO:0016020">
    <property type="term" value="C:membrane"/>
    <property type="evidence" value="ECO:0007669"/>
    <property type="project" value="GOC"/>
</dbReference>
<dbReference type="GO" id="GO:0000035">
    <property type="term" value="F:acyl binding"/>
    <property type="evidence" value="ECO:0007669"/>
    <property type="project" value="TreeGrafter"/>
</dbReference>
<dbReference type="GO" id="GO:0000036">
    <property type="term" value="F:acyl carrier activity"/>
    <property type="evidence" value="ECO:0007669"/>
    <property type="project" value="UniProtKB-UniRule"/>
</dbReference>
<dbReference type="GO" id="GO:0009245">
    <property type="term" value="P:lipid A biosynthetic process"/>
    <property type="evidence" value="ECO:0007669"/>
    <property type="project" value="TreeGrafter"/>
</dbReference>
<dbReference type="FunFam" id="1.10.1200.10:FF:000001">
    <property type="entry name" value="Acyl carrier protein"/>
    <property type="match status" value="1"/>
</dbReference>
<dbReference type="Gene3D" id="1.10.1200.10">
    <property type="entry name" value="ACP-like"/>
    <property type="match status" value="1"/>
</dbReference>
<dbReference type="HAMAP" id="MF_01217">
    <property type="entry name" value="Acyl_carrier"/>
    <property type="match status" value="1"/>
</dbReference>
<dbReference type="InterPro" id="IPR003231">
    <property type="entry name" value="ACP"/>
</dbReference>
<dbReference type="InterPro" id="IPR036736">
    <property type="entry name" value="ACP-like_sf"/>
</dbReference>
<dbReference type="InterPro" id="IPR009081">
    <property type="entry name" value="PP-bd_ACP"/>
</dbReference>
<dbReference type="InterPro" id="IPR006162">
    <property type="entry name" value="Ppantetheine_attach_site"/>
</dbReference>
<dbReference type="NCBIfam" id="TIGR00517">
    <property type="entry name" value="acyl_carrier"/>
    <property type="match status" value="1"/>
</dbReference>
<dbReference type="NCBIfam" id="NF002148">
    <property type="entry name" value="PRK00982.1-2"/>
    <property type="match status" value="1"/>
</dbReference>
<dbReference type="NCBIfam" id="NF002150">
    <property type="entry name" value="PRK00982.1-4"/>
    <property type="match status" value="1"/>
</dbReference>
<dbReference type="NCBIfam" id="NF002151">
    <property type="entry name" value="PRK00982.1-5"/>
    <property type="match status" value="1"/>
</dbReference>
<dbReference type="PANTHER" id="PTHR20863">
    <property type="entry name" value="ACYL CARRIER PROTEIN"/>
    <property type="match status" value="1"/>
</dbReference>
<dbReference type="PANTHER" id="PTHR20863:SF76">
    <property type="entry name" value="CARRIER DOMAIN-CONTAINING PROTEIN"/>
    <property type="match status" value="1"/>
</dbReference>
<dbReference type="Pfam" id="PF00550">
    <property type="entry name" value="PP-binding"/>
    <property type="match status" value="1"/>
</dbReference>
<dbReference type="SUPFAM" id="SSF47336">
    <property type="entry name" value="ACP-like"/>
    <property type="match status" value="1"/>
</dbReference>
<dbReference type="PROSITE" id="PS50075">
    <property type="entry name" value="CARRIER"/>
    <property type="match status" value="1"/>
</dbReference>
<dbReference type="PROSITE" id="PS00012">
    <property type="entry name" value="PHOSPHOPANTETHEINE"/>
    <property type="match status" value="1"/>
</dbReference>
<evidence type="ECO:0000255" key="1">
    <source>
        <dbReference type="HAMAP-Rule" id="MF_01217"/>
    </source>
</evidence>
<evidence type="ECO:0000255" key="2">
    <source>
        <dbReference type="PROSITE-ProRule" id="PRU00258"/>
    </source>
</evidence>
<protein>
    <recommendedName>
        <fullName evidence="1">Acyl carrier protein</fullName>
        <shortName evidence="1">ACP</shortName>
    </recommendedName>
</protein>
<accession>Q4L5T4</accession>
<reference key="1">
    <citation type="journal article" date="2005" name="J. Bacteriol.">
        <title>Whole-genome sequencing of Staphylococcus haemolyticus uncovers the extreme plasticity of its genome and the evolution of human-colonizing staphylococcal species.</title>
        <authorList>
            <person name="Takeuchi F."/>
            <person name="Watanabe S."/>
            <person name="Baba T."/>
            <person name="Yuzawa H."/>
            <person name="Ito T."/>
            <person name="Morimoto Y."/>
            <person name="Kuroda M."/>
            <person name="Cui L."/>
            <person name="Takahashi M."/>
            <person name="Ankai A."/>
            <person name="Baba S."/>
            <person name="Fukui S."/>
            <person name="Lee J.C."/>
            <person name="Hiramatsu K."/>
        </authorList>
    </citation>
    <scope>NUCLEOTIDE SEQUENCE [LARGE SCALE GENOMIC DNA]</scope>
    <source>
        <strain>JCSC1435</strain>
    </source>
</reference>
<sequence>MENFDKVKDIIVDRLGVDADKVTEDASFKDDLGADSLDIAELVMELEDEFGTEIPDEEAEKINTVGDAVKYINSLEK</sequence>
<organism>
    <name type="scientific">Staphylococcus haemolyticus (strain JCSC1435)</name>
    <dbReference type="NCBI Taxonomy" id="279808"/>
    <lineage>
        <taxon>Bacteria</taxon>
        <taxon>Bacillati</taxon>
        <taxon>Bacillota</taxon>
        <taxon>Bacilli</taxon>
        <taxon>Bacillales</taxon>
        <taxon>Staphylococcaceae</taxon>
        <taxon>Staphylococcus</taxon>
    </lineage>
</organism>
<name>ACP_STAHJ</name>
<proteinExistence type="inferred from homology"/>
<gene>
    <name evidence="1" type="primary">acpP</name>
    <name type="ordered locus">SH1682</name>
</gene>
<comment type="function">
    <text evidence="1">Carrier of the growing fatty acid chain in fatty acid biosynthesis.</text>
</comment>
<comment type="pathway">
    <text evidence="1">Lipid metabolism; fatty acid biosynthesis.</text>
</comment>
<comment type="subcellular location">
    <subcellularLocation>
        <location evidence="1">Cytoplasm</location>
    </subcellularLocation>
</comment>
<comment type="PTM">
    <text evidence="1">4'-phosphopantetheine is transferred from CoA to a specific serine of apo-ACP by AcpS. This modification is essential for activity because fatty acids are bound in thioester linkage to the sulfhydryl of the prosthetic group.</text>
</comment>
<comment type="similarity">
    <text evidence="1">Belongs to the acyl carrier protein (ACP) family.</text>
</comment>
<feature type="chain" id="PRO_0000180196" description="Acyl carrier protein">
    <location>
        <begin position="1"/>
        <end position="77"/>
    </location>
</feature>
<feature type="domain" description="Carrier" evidence="2">
    <location>
        <begin position="1"/>
        <end position="76"/>
    </location>
</feature>
<feature type="modified residue" description="O-(pantetheine 4'-phosphoryl)serine" evidence="2">
    <location>
        <position position="36"/>
    </location>
</feature>
<keyword id="KW-0963">Cytoplasm</keyword>
<keyword id="KW-0275">Fatty acid biosynthesis</keyword>
<keyword id="KW-0276">Fatty acid metabolism</keyword>
<keyword id="KW-0444">Lipid biosynthesis</keyword>
<keyword id="KW-0443">Lipid metabolism</keyword>
<keyword id="KW-0596">Phosphopantetheine</keyword>
<keyword id="KW-0597">Phosphoprotein</keyword>